<accession>Q9HE18</accession>
<comment type="function">
    <text evidence="3">Involved in degradation of plant cell walls. Hydrolyzes the feruloyl-arabinose ester bond in arabinoxylans, and the feruloyl-galactose and feruloyl-arabinose ester bonds in pectin. Binds strongly to cellulose.</text>
</comment>
<comment type="catalytic activity">
    <reaction evidence="3">
        <text>feruloyl-polysaccharide + H2O = ferulate + polysaccharide.</text>
        <dbReference type="EC" id="3.1.1.73"/>
    </reaction>
</comment>
<comment type="activity regulation">
    <text evidence="3">Inhibited by the specific serine esterase inhibitor AEBSF.</text>
</comment>
<comment type="subcellular location">
    <subcellularLocation>
        <location evidence="3">Secreted</location>
    </subcellularLocation>
</comment>
<comment type="induction">
    <text evidence="3 4">Repressed by glucose, probably via the carbon catabolite repressor protein CreA.</text>
</comment>
<comment type="PTM">
    <text evidence="4 5">Glycosylated.</text>
</comment>
<comment type="similarity">
    <text evidence="5">Belongs to the carbohydrate esterase 1 (CE1) family. Feruloyl esterase type B subfamily.</text>
</comment>
<proteinExistence type="evidence at protein level"/>
<reference evidence="5" key="1">
    <citation type="journal article" date="2000" name="Eur. J. Biochem.">
        <title>A modular esterase from Penicillium funiculosum which releases ferulic acid from plant cell walls and binds crystalline cellulose contains a carbohydrate binding module.</title>
        <authorList>
            <person name="Kroon P.A."/>
            <person name="Williamson G."/>
            <person name="Fish N.M."/>
            <person name="Archer D.B."/>
            <person name="Belshaw N.J."/>
        </authorList>
    </citation>
    <scope>NUCLEOTIDE SEQUENCE [GENOMIC DNA]</scope>
    <scope>PROTEIN SEQUENCE OF 19-68; 90-97; 163-167; 212-241 AND 259-274</scope>
    <scope>FUNCTION</scope>
    <scope>SUBCELLULAR LOCATION</scope>
    <scope>INDUCTION</scope>
    <source>
        <strain>IMI 134756</strain>
    </source>
</reference>
<keyword id="KW-0119">Carbohydrate metabolism</keyword>
<keyword id="KW-0903">Direct protein sequencing</keyword>
<keyword id="KW-0325">Glycoprotein</keyword>
<keyword id="KW-0378">Hydrolase</keyword>
<keyword id="KW-0624">Polysaccharide degradation</keyword>
<keyword id="KW-0964">Secreted</keyword>
<keyword id="KW-0719">Serine esterase</keyword>
<keyword id="KW-0732">Signal</keyword>
<keyword id="KW-0858">Xylan degradation</keyword>
<evidence type="ECO:0000255" key="1"/>
<evidence type="ECO:0000255" key="2">
    <source>
        <dbReference type="PROSITE-ProRule" id="PRU00597"/>
    </source>
</evidence>
<evidence type="ECO:0000269" key="3">
    <source>
    </source>
</evidence>
<evidence type="ECO:0000303" key="4">
    <source>
    </source>
</evidence>
<evidence type="ECO:0000305" key="5"/>
<evidence type="ECO:0000312" key="6">
    <source>
        <dbReference type="EMBL" id="CAC14144.1"/>
    </source>
</evidence>
<name>FAEB_TALFU</name>
<organism evidence="6">
    <name type="scientific">Talaromyces funiculosus</name>
    <name type="common">Fruitlet core rot fungus</name>
    <name type="synonym">Penicillium funiculosum</name>
    <dbReference type="NCBI Taxonomy" id="28572"/>
    <lineage>
        <taxon>Eukaryota</taxon>
        <taxon>Fungi</taxon>
        <taxon>Dikarya</taxon>
        <taxon>Ascomycota</taxon>
        <taxon>Pezizomycotina</taxon>
        <taxon>Eurotiomycetes</taxon>
        <taxon>Eurotiomycetidae</taxon>
        <taxon>Eurotiales</taxon>
        <taxon>Trichocomaceae</taxon>
        <taxon>Talaromyces</taxon>
        <taxon>Talaromyces sect. Talaromyces</taxon>
    </lineage>
</organism>
<dbReference type="EC" id="3.1.1.73"/>
<dbReference type="EMBL" id="AJ291496">
    <property type="protein sequence ID" value="CAC14144.1"/>
    <property type="molecule type" value="Genomic_DNA"/>
</dbReference>
<dbReference type="SMR" id="Q9HE18"/>
<dbReference type="CAZy" id="CBM1">
    <property type="family name" value="Carbohydrate-Binding Module Family 1"/>
</dbReference>
<dbReference type="ESTHER" id="penfn-faeb">
    <property type="family name" value="Esterase_phb"/>
</dbReference>
<dbReference type="GlyCosmos" id="Q9HE18">
    <property type="glycosylation" value="2 sites, No reported glycans"/>
</dbReference>
<dbReference type="BRENDA" id="3.1.1.73">
    <property type="organism ID" value="4616"/>
</dbReference>
<dbReference type="GO" id="GO:0005576">
    <property type="term" value="C:extracellular region"/>
    <property type="evidence" value="ECO:0000314"/>
    <property type="project" value="UniProtKB"/>
</dbReference>
<dbReference type="GO" id="GO:0030248">
    <property type="term" value="F:cellulose binding"/>
    <property type="evidence" value="ECO:0000314"/>
    <property type="project" value="UniProtKB"/>
</dbReference>
<dbReference type="GO" id="GO:0030600">
    <property type="term" value="F:feruloyl esterase activity"/>
    <property type="evidence" value="ECO:0000314"/>
    <property type="project" value="UniProtKB"/>
</dbReference>
<dbReference type="GO" id="GO:0016998">
    <property type="term" value="P:cell wall macromolecule catabolic process"/>
    <property type="evidence" value="ECO:0000314"/>
    <property type="project" value="UniProtKB"/>
</dbReference>
<dbReference type="GO" id="GO:0045490">
    <property type="term" value="P:pectin catabolic process"/>
    <property type="evidence" value="ECO:0000314"/>
    <property type="project" value="UniProtKB"/>
</dbReference>
<dbReference type="GO" id="GO:0045493">
    <property type="term" value="P:xylan catabolic process"/>
    <property type="evidence" value="ECO:0000314"/>
    <property type="project" value="UniProtKB"/>
</dbReference>
<dbReference type="FunFam" id="3.40.50.1820:FF:000203">
    <property type="entry name" value="Feruloyl esterase B"/>
    <property type="match status" value="1"/>
</dbReference>
<dbReference type="Gene3D" id="3.40.50.1820">
    <property type="entry name" value="alpha/beta hydrolase"/>
    <property type="match status" value="1"/>
</dbReference>
<dbReference type="InterPro" id="IPR029058">
    <property type="entry name" value="AB_hydrolase_fold"/>
</dbReference>
<dbReference type="InterPro" id="IPR000254">
    <property type="entry name" value="Cellulose-bd_dom_fun"/>
</dbReference>
<dbReference type="InterPro" id="IPR010126">
    <property type="entry name" value="Esterase_phb"/>
</dbReference>
<dbReference type="InterPro" id="IPR050955">
    <property type="entry name" value="Plant_Biomass_Hydrol_Est"/>
</dbReference>
<dbReference type="NCBIfam" id="TIGR01840">
    <property type="entry name" value="esterase_phb"/>
    <property type="match status" value="1"/>
</dbReference>
<dbReference type="PANTHER" id="PTHR43037:SF3">
    <property type="entry name" value="FERULOYL ESTERASE B"/>
    <property type="match status" value="1"/>
</dbReference>
<dbReference type="PANTHER" id="PTHR43037">
    <property type="entry name" value="UNNAMED PRODUCT-RELATED"/>
    <property type="match status" value="1"/>
</dbReference>
<dbReference type="Pfam" id="PF00734">
    <property type="entry name" value="CBM_1"/>
    <property type="match status" value="1"/>
</dbReference>
<dbReference type="Pfam" id="PF10503">
    <property type="entry name" value="Esterase_PHB"/>
    <property type="match status" value="1"/>
</dbReference>
<dbReference type="SMART" id="SM00236">
    <property type="entry name" value="fCBD"/>
    <property type="match status" value="1"/>
</dbReference>
<dbReference type="SUPFAM" id="SSF53474">
    <property type="entry name" value="alpha/beta-Hydrolases"/>
    <property type="match status" value="2"/>
</dbReference>
<dbReference type="PROSITE" id="PS00562">
    <property type="entry name" value="CBM1_1"/>
    <property type="match status" value="1"/>
</dbReference>
<dbReference type="PROSITE" id="PS51164">
    <property type="entry name" value="CBM1_2"/>
    <property type="match status" value="1"/>
</dbReference>
<protein>
    <recommendedName>
        <fullName>Feruloyl esterase B</fullName>
        <ecNumber>3.1.1.73</ecNumber>
    </recommendedName>
    <alternativeName>
        <fullName>Cinnamoyl esterase</fullName>
    </alternativeName>
    <alternativeName>
        <fullName>Ferulic acid esterase B</fullName>
        <shortName>FAEB</shortName>
    </alternativeName>
</protein>
<sequence length="353" mass="37334">MAIPLVLVLAWLLPVVLAASLTQVNNFGDNPGSLQMYIYVPNKLASKPAIIVAMHPCGGSATEYYGMYDYHSPADQYGYILIYPSATRDYNCFDAYSSASLTHNGGSDSLSIVNMVKYVISTYGADSSKVYMTGSSSGAIMTNVLAGAYPDVFAAGSAFSGMPYACLYGAGAADPIMSNQTCSQGQIQHTGQQWAAYVHNGYPGYTGQYPRLQMWHGTADNVISYADLGQEISQWTTIMGLSFTGNQTNTPLSGYTKMVYGDGSKFQAYSAAGVGHFVPTDVSVVLDWFGITSGTTTTTTPTTTPTTSTSPSSTGGCTAAHWAQCGGIGYSGCTACASPYTCQKANDYYSQCL</sequence>
<feature type="signal peptide" evidence="3">
    <location>
        <begin position="1"/>
        <end position="18"/>
    </location>
</feature>
<feature type="chain" id="PRO_0000021229" description="Feruloyl esterase B">
    <location>
        <begin position="19"/>
        <end position="353"/>
    </location>
</feature>
<feature type="domain" description="CBM1" evidence="2">
    <location>
        <begin position="317"/>
        <end position="353"/>
    </location>
</feature>
<feature type="region of interest" description="Catalytic" evidence="5">
    <location>
        <begin position="19"/>
        <end position="291"/>
    </location>
</feature>
<feature type="active site" description="Charge relay system">
    <location>
        <position position="136"/>
    </location>
</feature>
<feature type="glycosylation site" description="N-linked (GlcNAc...) asparagine" evidence="1">
    <location>
        <position position="179"/>
    </location>
</feature>
<feature type="glycosylation site" description="N-linked (GlcNAc...) asparagine" evidence="1">
    <location>
        <position position="246"/>
    </location>
</feature>
<gene>
    <name type="primary">FAEB</name>
</gene>